<evidence type="ECO:0000250" key="1">
    <source>
        <dbReference type="UniProtKB" id="Q14232"/>
    </source>
</evidence>
<evidence type="ECO:0000250" key="2">
    <source>
        <dbReference type="UniProtKB" id="Q9USP0"/>
    </source>
</evidence>
<evidence type="ECO:0000305" key="3"/>
<organism>
    <name type="scientific">Rattus norvegicus</name>
    <name type="common">Rat</name>
    <dbReference type="NCBI Taxonomy" id="10116"/>
    <lineage>
        <taxon>Eukaryota</taxon>
        <taxon>Metazoa</taxon>
        <taxon>Chordata</taxon>
        <taxon>Craniata</taxon>
        <taxon>Vertebrata</taxon>
        <taxon>Euteleostomi</taxon>
        <taxon>Mammalia</taxon>
        <taxon>Eutheria</taxon>
        <taxon>Euarchontoglires</taxon>
        <taxon>Glires</taxon>
        <taxon>Rodentia</taxon>
        <taxon>Myomorpha</taxon>
        <taxon>Muroidea</taxon>
        <taxon>Muridae</taxon>
        <taxon>Murinae</taxon>
        <taxon>Rattus</taxon>
    </lineage>
</organism>
<feature type="chain" id="PRO_0000156057" description="Translation initiation factor eIF2B subunit alpha">
    <location>
        <begin position="1"/>
        <end position="305"/>
    </location>
</feature>
<feature type="modified residue" description="N6-acetyllysine" evidence="1">
    <location>
        <position position="35"/>
    </location>
</feature>
<gene>
    <name type="primary">Eif2b1</name>
    <name type="synonym">Eif2ba</name>
</gene>
<keyword id="KW-0007">Acetylation</keyword>
<keyword id="KW-0963">Cytoplasm</keyword>
<keyword id="KW-0396">Initiation factor</keyword>
<keyword id="KW-0648">Protein biosynthesis</keyword>
<keyword id="KW-1185">Reference proteome</keyword>
<proteinExistence type="evidence at transcript level"/>
<accession>Q64270</accession>
<protein>
    <recommendedName>
        <fullName>Translation initiation factor eIF2B subunit alpha</fullName>
    </recommendedName>
    <alternativeName>
        <fullName>eIF2B GDP-GTP exchange factor subunit alpha</fullName>
    </alternativeName>
</protein>
<sequence>MEDGELIKYFKSQMKGDPNMASAVAAIQTLLEFLKRDKGETIQGLRAHLTKAIETLCAVDSSVAVSSGGELFLRFISLTSLEYSDYSKCKKIMIERGELFLSRISLSRTKIASLCHAFIKDGARILTHAYSRVVLRVLEEAVAAKKRFSVYITESQPDLSGKKMAKALCHLNVPVTVVLDAAVGYIMEKVDLVIVGAEGVVENGGIINKIGTNQMAVCAKAQNKPFYVVAESFKFVRLFPLNQQDVPDKFKYKADTLKSVQAGQDLKEEHPWVDYTSPSLITLLFTDLGVLTPSAVSDELIKLYL</sequence>
<comment type="function">
    <text evidence="1">Acts as a component of the translation initiation factor 2B (eIF2B) complex, which catalyzes the exchange of GDP for GTP on eukaryotic initiation factor 2 (eIF2) gamma subunit. Its guanine nucleotide exchange factor activity is repressed when bound to eIF2 complex phosphorylated on the alpha subunit, thereby limiting the amount of methionyl-initiator methionine tRNA available to the ribosome and consequently global translation is repressed.</text>
</comment>
<comment type="activity regulation">
    <text evidence="1">Activated by the chemical integrated stress response (ISR) inhibitor ISRIB which stimulates guanine nucleotide exchange factor activity for both phosphorylated and unphosphorylated eIF2.</text>
</comment>
<comment type="subunit">
    <text evidence="1">Component of the translation initiation factor 2B (eIF2B) complex which is a heterodecamer of two sets of five different subunits: alpha, beta, gamma, delta and epsilon. Subunits alpha, beta and delta comprise a regulatory subcomplex and subunits epsilon and gamma comprise a catalytic subcomplex. Within the complex, the hexameric regulatory complex resides at the center, with the two heterodimeric catalytic subcomplexes bound on opposite sides.</text>
</comment>
<comment type="subcellular location">
    <subcellularLocation>
        <location evidence="2">Cytoplasm</location>
        <location evidence="2">Cytosol</location>
    </subcellularLocation>
</comment>
<comment type="similarity">
    <text evidence="3">Belongs to the eIF-2B alpha/beta/delta subunits family.</text>
</comment>
<dbReference type="EMBL" id="U05821">
    <property type="protein sequence ID" value="AAC52196.1"/>
    <property type="molecule type" value="mRNA"/>
</dbReference>
<dbReference type="EMBL" id="L41679">
    <property type="protein sequence ID" value="AAA91276.1"/>
    <property type="molecule type" value="Genomic_DNA"/>
</dbReference>
<dbReference type="EMBL" id="BC081709">
    <property type="protein sequence ID" value="AAH81709.1"/>
    <property type="molecule type" value="mRNA"/>
</dbReference>
<dbReference type="PIR" id="I59376">
    <property type="entry name" value="I59376"/>
</dbReference>
<dbReference type="RefSeq" id="NP_742026.1">
    <property type="nucleotide sequence ID" value="NM_172029.2"/>
</dbReference>
<dbReference type="SMR" id="Q64270"/>
<dbReference type="FunCoup" id="Q64270">
    <property type="interactions" value="4431"/>
</dbReference>
<dbReference type="STRING" id="10116.ENSRNOP00000075870"/>
<dbReference type="PhosphoSitePlus" id="Q64270"/>
<dbReference type="jPOST" id="Q64270"/>
<dbReference type="PaxDb" id="10116-ENSRNOP00000001373"/>
<dbReference type="GeneID" id="64514"/>
<dbReference type="KEGG" id="rno:64514"/>
<dbReference type="UCSC" id="RGD:620819">
    <property type="organism name" value="rat"/>
</dbReference>
<dbReference type="AGR" id="RGD:620819"/>
<dbReference type="CTD" id="1967"/>
<dbReference type="RGD" id="620819">
    <property type="gene designation" value="Eif2b1"/>
</dbReference>
<dbReference type="eggNOG" id="KOG1466">
    <property type="taxonomic scope" value="Eukaryota"/>
</dbReference>
<dbReference type="HOGENOM" id="CLU_016218_0_2_1"/>
<dbReference type="InParanoid" id="Q64270"/>
<dbReference type="OrthoDB" id="49355at9989"/>
<dbReference type="PhylomeDB" id="Q64270"/>
<dbReference type="TreeFam" id="TF101505"/>
<dbReference type="Reactome" id="R-RNO-72731">
    <property type="pathway name" value="Recycling of eIF2:GDP"/>
</dbReference>
<dbReference type="PRO" id="PR:Q64270"/>
<dbReference type="Proteomes" id="UP000002494">
    <property type="component" value="Chromosome 12"/>
</dbReference>
<dbReference type="Bgee" id="ENSRNOG00000001039">
    <property type="expression patterns" value="Expressed in pancreas and 20 other cell types or tissues"/>
</dbReference>
<dbReference type="ExpressionAtlas" id="Q64270">
    <property type="expression patterns" value="baseline and differential"/>
</dbReference>
<dbReference type="GO" id="GO:0005737">
    <property type="term" value="C:cytoplasm"/>
    <property type="evidence" value="ECO:0000250"/>
    <property type="project" value="UniProtKB"/>
</dbReference>
<dbReference type="GO" id="GO:0005829">
    <property type="term" value="C:cytosol"/>
    <property type="evidence" value="ECO:0007669"/>
    <property type="project" value="UniProtKB-SubCell"/>
</dbReference>
<dbReference type="GO" id="GO:0005850">
    <property type="term" value="C:eukaryotic translation initiation factor 2 complex"/>
    <property type="evidence" value="ECO:0000314"/>
    <property type="project" value="RGD"/>
</dbReference>
<dbReference type="GO" id="GO:0005851">
    <property type="term" value="C:eukaryotic translation initiation factor 2B complex"/>
    <property type="evidence" value="ECO:0000314"/>
    <property type="project" value="RGD"/>
</dbReference>
<dbReference type="GO" id="GO:0016020">
    <property type="term" value="C:membrane"/>
    <property type="evidence" value="ECO:0000266"/>
    <property type="project" value="RGD"/>
</dbReference>
<dbReference type="GO" id="GO:0005886">
    <property type="term" value="C:plasma membrane"/>
    <property type="evidence" value="ECO:0000266"/>
    <property type="project" value="RGD"/>
</dbReference>
<dbReference type="GO" id="GO:0019003">
    <property type="term" value="F:GDP binding"/>
    <property type="evidence" value="ECO:0000314"/>
    <property type="project" value="RGD"/>
</dbReference>
<dbReference type="GO" id="GO:0005525">
    <property type="term" value="F:GTP binding"/>
    <property type="evidence" value="ECO:0000315"/>
    <property type="project" value="RGD"/>
</dbReference>
<dbReference type="GO" id="GO:0005085">
    <property type="term" value="F:guanyl-nucleotide exchange factor activity"/>
    <property type="evidence" value="ECO:0000266"/>
    <property type="project" value="RGD"/>
</dbReference>
<dbReference type="GO" id="GO:0042802">
    <property type="term" value="F:identical protein binding"/>
    <property type="evidence" value="ECO:0000266"/>
    <property type="project" value="RGD"/>
</dbReference>
<dbReference type="GO" id="GO:0003743">
    <property type="term" value="F:translation initiation factor activity"/>
    <property type="evidence" value="ECO:0000314"/>
    <property type="project" value="RGD"/>
</dbReference>
<dbReference type="GO" id="GO:0002183">
    <property type="term" value="P:cytoplasmic translational initiation"/>
    <property type="evidence" value="ECO:0000250"/>
    <property type="project" value="UniProtKB"/>
</dbReference>
<dbReference type="GO" id="GO:0014003">
    <property type="term" value="P:oligodendrocyte development"/>
    <property type="evidence" value="ECO:0000250"/>
    <property type="project" value="UniProtKB"/>
</dbReference>
<dbReference type="GO" id="GO:1990928">
    <property type="term" value="P:response to amino acid starvation"/>
    <property type="evidence" value="ECO:0000314"/>
    <property type="project" value="RGD"/>
</dbReference>
<dbReference type="GO" id="GO:0009749">
    <property type="term" value="P:response to glucose"/>
    <property type="evidence" value="ECO:0000314"/>
    <property type="project" value="UniProtKB"/>
</dbReference>
<dbReference type="GO" id="GO:0009408">
    <property type="term" value="P:response to heat"/>
    <property type="evidence" value="ECO:0000314"/>
    <property type="project" value="UniProtKB"/>
</dbReference>
<dbReference type="GO" id="GO:0043434">
    <property type="term" value="P:response to peptide hormone"/>
    <property type="evidence" value="ECO:0000314"/>
    <property type="project" value="UniProtKB"/>
</dbReference>
<dbReference type="GO" id="GO:0050852">
    <property type="term" value="P:T cell receptor signaling pathway"/>
    <property type="evidence" value="ECO:0000250"/>
    <property type="project" value="UniProtKB"/>
</dbReference>
<dbReference type="GO" id="GO:0006412">
    <property type="term" value="P:translation"/>
    <property type="evidence" value="ECO:0000314"/>
    <property type="project" value="RGD"/>
</dbReference>
<dbReference type="GO" id="GO:0006413">
    <property type="term" value="P:translational initiation"/>
    <property type="evidence" value="ECO:0000314"/>
    <property type="project" value="RGD"/>
</dbReference>
<dbReference type="FunFam" id="1.20.120.1070:FF:000001">
    <property type="entry name" value="Eukaryotic translation initiation factor 2B subunit alpha"/>
    <property type="match status" value="1"/>
</dbReference>
<dbReference type="FunFam" id="3.40.50.10470:FF:000001">
    <property type="entry name" value="Translation initiation factor eIF-2B subunit alpha"/>
    <property type="match status" value="1"/>
</dbReference>
<dbReference type="Gene3D" id="3.40.50.10470">
    <property type="entry name" value="Translation initiation factor eif-2b, domain 2"/>
    <property type="match status" value="1"/>
</dbReference>
<dbReference type="Gene3D" id="1.20.120.1070">
    <property type="entry name" value="Translation initiation factor eIF-2B, N-terminal domain"/>
    <property type="match status" value="1"/>
</dbReference>
<dbReference type="InterPro" id="IPR051501">
    <property type="entry name" value="eIF2B_alpha/beta/delta"/>
</dbReference>
<dbReference type="InterPro" id="IPR042528">
    <property type="entry name" value="elF-2B_alpha_N"/>
</dbReference>
<dbReference type="InterPro" id="IPR000649">
    <property type="entry name" value="IF-2B-related"/>
</dbReference>
<dbReference type="InterPro" id="IPR042529">
    <property type="entry name" value="IF_2B-like_C"/>
</dbReference>
<dbReference type="InterPro" id="IPR037171">
    <property type="entry name" value="NagB/RpiA_transferase-like"/>
</dbReference>
<dbReference type="PANTHER" id="PTHR45860">
    <property type="entry name" value="TRANSLATION INITIATION FACTOR EIF-2B SUBUNIT ALPHA"/>
    <property type="match status" value="1"/>
</dbReference>
<dbReference type="PANTHER" id="PTHR45860:SF1">
    <property type="entry name" value="TRANSLATION INITIATION FACTOR EIF-2B SUBUNIT ALPHA"/>
    <property type="match status" value="1"/>
</dbReference>
<dbReference type="Pfam" id="PF01008">
    <property type="entry name" value="IF-2B"/>
    <property type="match status" value="1"/>
</dbReference>
<dbReference type="SUPFAM" id="SSF100950">
    <property type="entry name" value="NagB/RpiA/CoA transferase-like"/>
    <property type="match status" value="1"/>
</dbReference>
<reference key="1">
    <citation type="journal article" date="1995" name="Proc. Natl. Acad. Sci. U.S.A.">
        <title>Molecular cloning and characterization of cDNA encoding the alpha subunit of the rat protein synthesis initiation factor eIF-2B.</title>
        <authorList>
            <person name="Flowers K.M."/>
            <person name="Kimball S.R."/>
            <person name="Feldhoff R.C."/>
            <person name="Hinnebusch A.G."/>
            <person name="Jefferson L.S."/>
        </authorList>
    </citation>
    <scope>NUCLEOTIDE SEQUENCE [MRNA]</scope>
    <source>
        <strain>Sprague-Dawley</strain>
        <tissue>Brain</tissue>
    </source>
</reference>
<reference key="2">
    <citation type="journal article" date="1995" name="Biochim. Biophys. Acta">
        <title>Structure and sequence of the gene encoding the alpha-subunit of rat translation initiation factor-2B.</title>
        <authorList>
            <person name="Flowers K.M."/>
            <person name="Mellor H."/>
            <person name="Kimball S.R."/>
            <person name="Jefferson L.S."/>
        </authorList>
    </citation>
    <scope>NUCLEOTIDE SEQUENCE [GENOMIC DNA]</scope>
</reference>
<reference key="3">
    <citation type="journal article" date="2004" name="Genome Res.">
        <title>The status, quality, and expansion of the NIH full-length cDNA project: the Mammalian Gene Collection (MGC).</title>
        <authorList>
            <consortium name="The MGC Project Team"/>
        </authorList>
    </citation>
    <scope>NUCLEOTIDE SEQUENCE [LARGE SCALE MRNA]</scope>
    <source>
        <tissue>Testis</tissue>
    </source>
</reference>
<name>EI2BA_RAT</name>